<keyword id="KW-0963">Cytoplasm</keyword>
<keyword id="KW-0501">Molybdenum cofactor biosynthesis</keyword>
<keyword id="KW-1185">Reference proteome</keyword>
<reference key="1">
    <citation type="journal article" date="2009" name="PLoS Genet.">
        <title>Organised genome dynamics in the Escherichia coli species results in highly diverse adaptive paths.</title>
        <authorList>
            <person name="Touchon M."/>
            <person name="Hoede C."/>
            <person name="Tenaillon O."/>
            <person name="Barbe V."/>
            <person name="Baeriswyl S."/>
            <person name="Bidet P."/>
            <person name="Bingen E."/>
            <person name="Bonacorsi S."/>
            <person name="Bouchier C."/>
            <person name="Bouvet O."/>
            <person name="Calteau A."/>
            <person name="Chiapello H."/>
            <person name="Clermont O."/>
            <person name="Cruveiller S."/>
            <person name="Danchin A."/>
            <person name="Diard M."/>
            <person name="Dossat C."/>
            <person name="Karoui M.E."/>
            <person name="Frapy E."/>
            <person name="Garry L."/>
            <person name="Ghigo J.M."/>
            <person name="Gilles A.M."/>
            <person name="Johnson J."/>
            <person name="Le Bouguenec C."/>
            <person name="Lescat M."/>
            <person name="Mangenot S."/>
            <person name="Martinez-Jehanne V."/>
            <person name="Matic I."/>
            <person name="Nassif X."/>
            <person name="Oztas S."/>
            <person name="Petit M.A."/>
            <person name="Pichon C."/>
            <person name="Rouy Z."/>
            <person name="Ruf C.S."/>
            <person name="Schneider D."/>
            <person name="Tourret J."/>
            <person name="Vacherie B."/>
            <person name="Vallenet D."/>
            <person name="Medigue C."/>
            <person name="Rocha E.P.C."/>
            <person name="Denamur E."/>
        </authorList>
    </citation>
    <scope>NUCLEOTIDE SEQUENCE [LARGE SCALE GENOMIC DNA]</scope>
    <source>
        <strain>S88 / ExPEC</strain>
    </source>
</reference>
<sequence length="277" mass="30532">MKKTQQKEIENVTNITGVRQIELWRRDDLQHPRLDEVAEEVPVALVYNGISHVVMMASPKDLEYFALGFSLSEGIIESPRDIFGMDVVPSCNGLEVQIELSSRRFMGLKERRRALAGRTGCGVCGVEQLNDIGKPVQPLPFTQTFDLNKLDDALRHLNDFQPVGQLTGCTHAAAWMLPSGELVGGHEDVGRHVALDKLLGRRSQEGESWQQGAVLVSSRASYEMVQKSAMCGVEILFAVSAATTLAVEVAERCNLTLVGFCKPGRATVYTHPQRLSN</sequence>
<gene>
    <name evidence="1" type="primary">fdhD</name>
    <name type="ordered locus">ECS88_4344</name>
</gene>
<feature type="chain" id="PRO_1000118557" description="Sulfur carrier protein FdhD">
    <location>
        <begin position="1"/>
        <end position="277"/>
    </location>
</feature>
<feature type="active site" description="Cysteine persulfide intermediate" evidence="1">
    <location>
        <position position="121"/>
    </location>
</feature>
<feature type="binding site" evidence="1">
    <location>
        <begin position="260"/>
        <end position="265"/>
    </location>
    <ligand>
        <name>Mo-bis(molybdopterin guanine dinucleotide)</name>
        <dbReference type="ChEBI" id="CHEBI:60539"/>
    </ligand>
</feature>
<comment type="function">
    <text evidence="1">Required for formate dehydrogenase (FDH) activity. Acts as a sulfur carrier protein that transfers sulfur from IscS to the molybdenum cofactor prior to its insertion into FDH.</text>
</comment>
<comment type="subcellular location">
    <subcellularLocation>
        <location evidence="1">Cytoplasm</location>
    </subcellularLocation>
</comment>
<comment type="similarity">
    <text evidence="1">Belongs to the FdhD family.</text>
</comment>
<protein>
    <recommendedName>
        <fullName evidence="1">Sulfur carrier protein FdhD</fullName>
    </recommendedName>
</protein>
<organism>
    <name type="scientific">Escherichia coli O45:K1 (strain S88 / ExPEC)</name>
    <dbReference type="NCBI Taxonomy" id="585035"/>
    <lineage>
        <taxon>Bacteria</taxon>
        <taxon>Pseudomonadati</taxon>
        <taxon>Pseudomonadota</taxon>
        <taxon>Gammaproteobacteria</taxon>
        <taxon>Enterobacterales</taxon>
        <taxon>Enterobacteriaceae</taxon>
        <taxon>Escherichia</taxon>
    </lineage>
</organism>
<evidence type="ECO:0000255" key="1">
    <source>
        <dbReference type="HAMAP-Rule" id="MF_00187"/>
    </source>
</evidence>
<dbReference type="EMBL" id="CU928161">
    <property type="protein sequence ID" value="CAR05527.1"/>
    <property type="molecule type" value="Genomic_DNA"/>
</dbReference>
<dbReference type="RefSeq" id="WP_000753589.1">
    <property type="nucleotide sequence ID" value="NC_011742.1"/>
</dbReference>
<dbReference type="SMR" id="B7MI29"/>
<dbReference type="GeneID" id="75174135"/>
<dbReference type="KEGG" id="ecz:ECS88_4344"/>
<dbReference type="HOGENOM" id="CLU_056887_2_0_6"/>
<dbReference type="Proteomes" id="UP000000747">
    <property type="component" value="Chromosome"/>
</dbReference>
<dbReference type="GO" id="GO:0005737">
    <property type="term" value="C:cytoplasm"/>
    <property type="evidence" value="ECO:0007669"/>
    <property type="project" value="UniProtKB-SubCell"/>
</dbReference>
<dbReference type="GO" id="GO:0097163">
    <property type="term" value="F:sulfur carrier activity"/>
    <property type="evidence" value="ECO:0007669"/>
    <property type="project" value="UniProtKB-UniRule"/>
</dbReference>
<dbReference type="GO" id="GO:0016783">
    <property type="term" value="F:sulfurtransferase activity"/>
    <property type="evidence" value="ECO:0007669"/>
    <property type="project" value="InterPro"/>
</dbReference>
<dbReference type="GO" id="GO:0006777">
    <property type="term" value="P:Mo-molybdopterin cofactor biosynthetic process"/>
    <property type="evidence" value="ECO:0007669"/>
    <property type="project" value="UniProtKB-UniRule"/>
</dbReference>
<dbReference type="FunFam" id="3.10.20.10:FF:000003">
    <property type="entry name" value="Sulfur carrier protein FdhD"/>
    <property type="match status" value="1"/>
</dbReference>
<dbReference type="FunFam" id="3.40.140.10:FF:000027">
    <property type="entry name" value="Sulfur carrier protein FdhD"/>
    <property type="match status" value="1"/>
</dbReference>
<dbReference type="Gene3D" id="3.10.20.10">
    <property type="match status" value="1"/>
</dbReference>
<dbReference type="Gene3D" id="3.40.140.10">
    <property type="entry name" value="Cytidine Deaminase, domain 2"/>
    <property type="match status" value="1"/>
</dbReference>
<dbReference type="HAMAP" id="MF_00187">
    <property type="entry name" value="FdhD"/>
    <property type="match status" value="1"/>
</dbReference>
<dbReference type="InterPro" id="IPR016193">
    <property type="entry name" value="Cytidine_deaminase-like"/>
</dbReference>
<dbReference type="InterPro" id="IPR003786">
    <property type="entry name" value="FdhD"/>
</dbReference>
<dbReference type="NCBIfam" id="TIGR00129">
    <property type="entry name" value="fdhD_narQ"/>
    <property type="match status" value="1"/>
</dbReference>
<dbReference type="PANTHER" id="PTHR30592">
    <property type="entry name" value="FORMATE DEHYDROGENASE"/>
    <property type="match status" value="1"/>
</dbReference>
<dbReference type="PANTHER" id="PTHR30592:SF1">
    <property type="entry name" value="SULFUR CARRIER PROTEIN FDHD"/>
    <property type="match status" value="1"/>
</dbReference>
<dbReference type="Pfam" id="PF02634">
    <property type="entry name" value="FdhD-NarQ"/>
    <property type="match status" value="1"/>
</dbReference>
<dbReference type="PIRSF" id="PIRSF015626">
    <property type="entry name" value="FdhD"/>
    <property type="match status" value="1"/>
</dbReference>
<dbReference type="SUPFAM" id="SSF53927">
    <property type="entry name" value="Cytidine deaminase-like"/>
    <property type="match status" value="1"/>
</dbReference>
<name>FDHD_ECO45</name>
<accession>B7MI29</accession>
<proteinExistence type="inferred from homology"/>